<sequence>MVVIRLARGGAKKRPFYNMVVTDSRNRRDGRFVERIGFYNPVASGNAEALRVSVDRLAYWQSNGAQLSPTVARLVKQHAAQQAA</sequence>
<comment type="similarity">
    <text evidence="1">Belongs to the bacterial ribosomal protein bS16 family.</text>
</comment>
<keyword id="KW-0687">Ribonucleoprotein</keyword>
<keyword id="KW-0689">Ribosomal protein</keyword>
<accession>Q47BI5</accession>
<feature type="chain" id="PRO_0000243798" description="Small ribosomal subunit protein bS16">
    <location>
        <begin position="1"/>
        <end position="84"/>
    </location>
</feature>
<evidence type="ECO:0000255" key="1">
    <source>
        <dbReference type="HAMAP-Rule" id="MF_00385"/>
    </source>
</evidence>
<evidence type="ECO:0000305" key="2"/>
<proteinExistence type="inferred from homology"/>
<protein>
    <recommendedName>
        <fullName evidence="1">Small ribosomal subunit protein bS16</fullName>
    </recommendedName>
    <alternativeName>
        <fullName evidence="2">30S ribosomal protein S16</fullName>
    </alternativeName>
</protein>
<gene>
    <name evidence="1" type="primary">rpsP</name>
    <name type="ordered locus">Daro_3066</name>
</gene>
<organism>
    <name type="scientific">Dechloromonas aromatica (strain RCB)</name>
    <dbReference type="NCBI Taxonomy" id="159087"/>
    <lineage>
        <taxon>Bacteria</taxon>
        <taxon>Pseudomonadati</taxon>
        <taxon>Pseudomonadota</taxon>
        <taxon>Betaproteobacteria</taxon>
        <taxon>Rhodocyclales</taxon>
        <taxon>Azonexaceae</taxon>
        <taxon>Dechloromonas</taxon>
    </lineage>
</organism>
<reference key="1">
    <citation type="journal article" date="2009" name="BMC Genomics">
        <title>Metabolic analysis of the soil microbe Dechloromonas aromatica str. RCB: indications of a surprisingly complex life-style and cryptic anaerobic pathways for aromatic degradation.</title>
        <authorList>
            <person name="Salinero K.K."/>
            <person name="Keller K."/>
            <person name="Feil W.S."/>
            <person name="Feil H."/>
            <person name="Trong S."/>
            <person name="Di Bartolo G."/>
            <person name="Lapidus A."/>
        </authorList>
    </citation>
    <scope>NUCLEOTIDE SEQUENCE [LARGE SCALE GENOMIC DNA]</scope>
    <source>
        <strain>RCB</strain>
    </source>
</reference>
<dbReference type="EMBL" id="CP000089">
    <property type="protein sequence ID" value="AAZ47796.1"/>
    <property type="molecule type" value="Genomic_DNA"/>
</dbReference>
<dbReference type="SMR" id="Q47BI5"/>
<dbReference type="STRING" id="159087.Daro_3066"/>
<dbReference type="KEGG" id="dar:Daro_3066"/>
<dbReference type="eggNOG" id="COG0228">
    <property type="taxonomic scope" value="Bacteria"/>
</dbReference>
<dbReference type="HOGENOM" id="CLU_100590_5_1_4"/>
<dbReference type="OrthoDB" id="9807878at2"/>
<dbReference type="GO" id="GO:0005737">
    <property type="term" value="C:cytoplasm"/>
    <property type="evidence" value="ECO:0007669"/>
    <property type="project" value="UniProtKB-ARBA"/>
</dbReference>
<dbReference type="GO" id="GO:0015935">
    <property type="term" value="C:small ribosomal subunit"/>
    <property type="evidence" value="ECO:0007669"/>
    <property type="project" value="TreeGrafter"/>
</dbReference>
<dbReference type="GO" id="GO:0003735">
    <property type="term" value="F:structural constituent of ribosome"/>
    <property type="evidence" value="ECO:0007669"/>
    <property type="project" value="InterPro"/>
</dbReference>
<dbReference type="GO" id="GO:0006412">
    <property type="term" value="P:translation"/>
    <property type="evidence" value="ECO:0007669"/>
    <property type="project" value="UniProtKB-UniRule"/>
</dbReference>
<dbReference type="Gene3D" id="3.30.1320.10">
    <property type="match status" value="1"/>
</dbReference>
<dbReference type="HAMAP" id="MF_00385">
    <property type="entry name" value="Ribosomal_bS16"/>
    <property type="match status" value="1"/>
</dbReference>
<dbReference type="InterPro" id="IPR000307">
    <property type="entry name" value="Ribosomal_bS16"/>
</dbReference>
<dbReference type="InterPro" id="IPR020592">
    <property type="entry name" value="Ribosomal_bS16_CS"/>
</dbReference>
<dbReference type="InterPro" id="IPR023803">
    <property type="entry name" value="Ribosomal_bS16_dom_sf"/>
</dbReference>
<dbReference type="NCBIfam" id="TIGR00002">
    <property type="entry name" value="S16"/>
    <property type="match status" value="1"/>
</dbReference>
<dbReference type="PANTHER" id="PTHR12919">
    <property type="entry name" value="30S RIBOSOMAL PROTEIN S16"/>
    <property type="match status" value="1"/>
</dbReference>
<dbReference type="PANTHER" id="PTHR12919:SF20">
    <property type="entry name" value="SMALL RIBOSOMAL SUBUNIT PROTEIN BS16M"/>
    <property type="match status" value="1"/>
</dbReference>
<dbReference type="Pfam" id="PF00886">
    <property type="entry name" value="Ribosomal_S16"/>
    <property type="match status" value="1"/>
</dbReference>
<dbReference type="SUPFAM" id="SSF54565">
    <property type="entry name" value="Ribosomal protein S16"/>
    <property type="match status" value="1"/>
</dbReference>
<dbReference type="PROSITE" id="PS00732">
    <property type="entry name" value="RIBOSOMAL_S16"/>
    <property type="match status" value="1"/>
</dbReference>
<name>RS16_DECAR</name>